<comment type="subunit">
    <text evidence="1">Part of the 50S ribosomal subunit.</text>
</comment>
<comment type="similarity">
    <text evidence="1">Belongs to the bacterial ribosomal protein bL31 family. Type B subfamily.</text>
</comment>
<reference key="1">
    <citation type="journal article" date="2011" name="J. Bacteriol.">
        <title>Genome sequence of lineage III Listeria monocytogenes strain HCC23.</title>
        <authorList>
            <person name="Steele C.L."/>
            <person name="Donaldson J.R."/>
            <person name="Paul D."/>
            <person name="Banes M.M."/>
            <person name="Arick T."/>
            <person name="Bridges S.M."/>
            <person name="Lawrence M.L."/>
        </authorList>
    </citation>
    <scope>NUCLEOTIDE SEQUENCE [LARGE SCALE GENOMIC DNA]</scope>
    <source>
        <strain>HCC23</strain>
    </source>
</reference>
<accession>B8DBG1</accession>
<sequence length="81" mass="9258">MKTGIHPEYRPVVFVDTSTDFKFLSGSTKSSSETIKWEDGNEYPLLRVEISSDSHPFYTGKQKHATADGRVDRFNKKYGLK</sequence>
<organism>
    <name type="scientific">Listeria monocytogenes serotype 4a (strain HCC23)</name>
    <dbReference type="NCBI Taxonomy" id="552536"/>
    <lineage>
        <taxon>Bacteria</taxon>
        <taxon>Bacillati</taxon>
        <taxon>Bacillota</taxon>
        <taxon>Bacilli</taxon>
        <taxon>Bacillales</taxon>
        <taxon>Listeriaceae</taxon>
        <taxon>Listeria</taxon>
    </lineage>
</organism>
<dbReference type="EMBL" id="CP001175">
    <property type="protein sequence ID" value="ACK38412.1"/>
    <property type="molecule type" value="Genomic_DNA"/>
</dbReference>
<dbReference type="RefSeq" id="WP_003726356.1">
    <property type="nucleotide sequence ID" value="NC_011660.1"/>
</dbReference>
<dbReference type="SMR" id="B8DBG1"/>
<dbReference type="KEGG" id="lmh:LMHCC_0049"/>
<dbReference type="HOGENOM" id="CLU_114306_2_2_9"/>
<dbReference type="GO" id="GO:1990904">
    <property type="term" value="C:ribonucleoprotein complex"/>
    <property type="evidence" value="ECO:0007669"/>
    <property type="project" value="UniProtKB-KW"/>
</dbReference>
<dbReference type="GO" id="GO:0005840">
    <property type="term" value="C:ribosome"/>
    <property type="evidence" value="ECO:0007669"/>
    <property type="project" value="UniProtKB-KW"/>
</dbReference>
<dbReference type="GO" id="GO:0003735">
    <property type="term" value="F:structural constituent of ribosome"/>
    <property type="evidence" value="ECO:0007669"/>
    <property type="project" value="InterPro"/>
</dbReference>
<dbReference type="GO" id="GO:0006412">
    <property type="term" value="P:translation"/>
    <property type="evidence" value="ECO:0007669"/>
    <property type="project" value="UniProtKB-UniRule"/>
</dbReference>
<dbReference type="Gene3D" id="4.10.830.30">
    <property type="entry name" value="Ribosomal protein L31"/>
    <property type="match status" value="1"/>
</dbReference>
<dbReference type="HAMAP" id="MF_00502">
    <property type="entry name" value="Ribosomal_bL31_2"/>
    <property type="match status" value="1"/>
</dbReference>
<dbReference type="InterPro" id="IPR034704">
    <property type="entry name" value="Ribosomal_bL28/bL31-like_sf"/>
</dbReference>
<dbReference type="InterPro" id="IPR002150">
    <property type="entry name" value="Ribosomal_bL31"/>
</dbReference>
<dbReference type="InterPro" id="IPR027493">
    <property type="entry name" value="Ribosomal_bL31_B"/>
</dbReference>
<dbReference type="InterPro" id="IPR042105">
    <property type="entry name" value="Ribosomal_bL31_sf"/>
</dbReference>
<dbReference type="NCBIfam" id="TIGR00105">
    <property type="entry name" value="L31"/>
    <property type="match status" value="1"/>
</dbReference>
<dbReference type="NCBIfam" id="NF002462">
    <property type="entry name" value="PRK01678.1"/>
    <property type="match status" value="1"/>
</dbReference>
<dbReference type="PANTHER" id="PTHR33280">
    <property type="entry name" value="50S RIBOSOMAL PROTEIN L31, CHLOROPLASTIC"/>
    <property type="match status" value="1"/>
</dbReference>
<dbReference type="PANTHER" id="PTHR33280:SF1">
    <property type="entry name" value="LARGE RIBOSOMAL SUBUNIT PROTEIN BL31C"/>
    <property type="match status" value="1"/>
</dbReference>
<dbReference type="Pfam" id="PF01197">
    <property type="entry name" value="Ribosomal_L31"/>
    <property type="match status" value="1"/>
</dbReference>
<dbReference type="PRINTS" id="PR01249">
    <property type="entry name" value="RIBOSOMALL31"/>
</dbReference>
<dbReference type="SUPFAM" id="SSF143800">
    <property type="entry name" value="L28p-like"/>
    <property type="match status" value="1"/>
</dbReference>
<dbReference type="PROSITE" id="PS01143">
    <property type="entry name" value="RIBOSOMAL_L31"/>
    <property type="match status" value="1"/>
</dbReference>
<proteinExistence type="inferred from homology"/>
<protein>
    <recommendedName>
        <fullName evidence="1">Large ribosomal subunit protein bL31B</fullName>
    </recommendedName>
    <alternativeName>
        <fullName evidence="2">50S ribosomal protein L31 type B</fullName>
    </alternativeName>
</protein>
<gene>
    <name evidence="1" type="primary">rpmE2</name>
    <name type="ordered locus">LMHCC_0049</name>
</gene>
<feature type="chain" id="PRO_1000176988" description="Large ribosomal subunit protein bL31B">
    <location>
        <begin position="1"/>
        <end position="81"/>
    </location>
</feature>
<keyword id="KW-0687">Ribonucleoprotein</keyword>
<keyword id="KW-0689">Ribosomal protein</keyword>
<evidence type="ECO:0000255" key="1">
    <source>
        <dbReference type="HAMAP-Rule" id="MF_00502"/>
    </source>
</evidence>
<evidence type="ECO:0000305" key="2"/>
<name>RL31B_LISMH</name>